<sequence>MAGKGRIIFHIDMNSFYASVEMAYDPSLRGKPIAVAGNVKERKGIIVTCSYEARARGVKTTMPVWRAKRLCPELIVVPPNFDRYRSSSKEMFSILREYTDLVEPVSIDEGYMDITDTPHSHRAYETAEDIQARLQKELLLPSSIGIAPNKFLAKMASDMKKPLGITILRKRELPDVLWPLPIEEMHGIGTKTAEKIKTLGIKTIGDLAKGDEHALKTLLGINGPRLKDKANGIHPAEVNPERIYEFKSVGNSSTLSHDSADWDELTGVFDRLALSVSERLQRKEVMACRLFIMIRYADWKTVTRSMTLSNPADQKKDIMEAAMELFDKHWNQNPVRLLGITGTELVEKQQAYKQLDLFSFKEDAKDEPIFQMMNELNEKYGQNLIRKGAVIKKEESKTRGTSFNRDFFQDEKKR</sequence>
<proteinExistence type="inferred from homology"/>
<keyword id="KW-0963">Cytoplasm</keyword>
<keyword id="KW-0227">DNA damage</keyword>
<keyword id="KW-0234">DNA repair</keyword>
<keyword id="KW-0235">DNA replication</keyword>
<keyword id="KW-0238">DNA-binding</keyword>
<keyword id="KW-0239">DNA-directed DNA polymerase</keyword>
<keyword id="KW-0460">Magnesium</keyword>
<keyword id="KW-0479">Metal-binding</keyword>
<keyword id="KW-0515">Mutator protein</keyword>
<keyword id="KW-0548">Nucleotidyltransferase</keyword>
<keyword id="KW-0808">Transferase</keyword>
<dbReference type="EC" id="2.7.7.7" evidence="1"/>
<dbReference type="EMBL" id="CP000560">
    <property type="protein sequence ID" value="ABS74579.1"/>
    <property type="molecule type" value="Genomic_DNA"/>
</dbReference>
<dbReference type="RefSeq" id="WP_012117936.1">
    <property type="nucleotide sequence ID" value="NC_009725.2"/>
</dbReference>
<dbReference type="SMR" id="A7Z6F3"/>
<dbReference type="GeneID" id="93081355"/>
<dbReference type="KEGG" id="bay:RBAM_022180"/>
<dbReference type="HOGENOM" id="CLU_012348_1_1_9"/>
<dbReference type="Proteomes" id="UP000001120">
    <property type="component" value="Chromosome"/>
</dbReference>
<dbReference type="GO" id="GO:0005829">
    <property type="term" value="C:cytosol"/>
    <property type="evidence" value="ECO:0007669"/>
    <property type="project" value="TreeGrafter"/>
</dbReference>
<dbReference type="GO" id="GO:0003684">
    <property type="term" value="F:damaged DNA binding"/>
    <property type="evidence" value="ECO:0007669"/>
    <property type="project" value="InterPro"/>
</dbReference>
<dbReference type="GO" id="GO:0003887">
    <property type="term" value="F:DNA-directed DNA polymerase activity"/>
    <property type="evidence" value="ECO:0007669"/>
    <property type="project" value="UniProtKB-UniRule"/>
</dbReference>
<dbReference type="GO" id="GO:0000287">
    <property type="term" value="F:magnesium ion binding"/>
    <property type="evidence" value="ECO:0007669"/>
    <property type="project" value="UniProtKB-UniRule"/>
</dbReference>
<dbReference type="GO" id="GO:0006261">
    <property type="term" value="P:DNA-templated DNA replication"/>
    <property type="evidence" value="ECO:0007669"/>
    <property type="project" value="UniProtKB-UniRule"/>
</dbReference>
<dbReference type="GO" id="GO:0042276">
    <property type="term" value="P:error-prone translesion synthesis"/>
    <property type="evidence" value="ECO:0007669"/>
    <property type="project" value="TreeGrafter"/>
</dbReference>
<dbReference type="GO" id="GO:0009432">
    <property type="term" value="P:SOS response"/>
    <property type="evidence" value="ECO:0007669"/>
    <property type="project" value="TreeGrafter"/>
</dbReference>
<dbReference type="CDD" id="cd03586">
    <property type="entry name" value="PolY_Pol_IV_kappa"/>
    <property type="match status" value="1"/>
</dbReference>
<dbReference type="FunFam" id="1.10.150.20:FF:000061">
    <property type="entry name" value="DNA polymerase IV"/>
    <property type="match status" value="1"/>
</dbReference>
<dbReference type="FunFam" id="3.40.1170.60:FF:000001">
    <property type="entry name" value="DNA polymerase IV"/>
    <property type="match status" value="1"/>
</dbReference>
<dbReference type="Gene3D" id="3.30.70.270">
    <property type="match status" value="1"/>
</dbReference>
<dbReference type="Gene3D" id="3.40.1170.60">
    <property type="match status" value="1"/>
</dbReference>
<dbReference type="Gene3D" id="1.10.150.20">
    <property type="entry name" value="5' to 3' exonuclease, C-terminal subdomain"/>
    <property type="match status" value="1"/>
</dbReference>
<dbReference type="Gene3D" id="3.30.1490.100">
    <property type="entry name" value="DNA polymerase, Y-family, little finger domain"/>
    <property type="match status" value="1"/>
</dbReference>
<dbReference type="HAMAP" id="MF_01113">
    <property type="entry name" value="DNApol_IV"/>
    <property type="match status" value="1"/>
</dbReference>
<dbReference type="InterPro" id="IPR043502">
    <property type="entry name" value="DNA/RNA_pol_sf"/>
</dbReference>
<dbReference type="InterPro" id="IPR036775">
    <property type="entry name" value="DNA_pol_Y-fam_lit_finger_sf"/>
</dbReference>
<dbReference type="InterPro" id="IPR017961">
    <property type="entry name" value="DNA_pol_Y-fam_little_finger"/>
</dbReference>
<dbReference type="InterPro" id="IPR050116">
    <property type="entry name" value="DNA_polymerase-Y"/>
</dbReference>
<dbReference type="InterPro" id="IPR022880">
    <property type="entry name" value="DNApol_IV"/>
</dbReference>
<dbReference type="InterPro" id="IPR024728">
    <property type="entry name" value="PolY_HhH_motif"/>
</dbReference>
<dbReference type="InterPro" id="IPR043128">
    <property type="entry name" value="Rev_trsase/Diguanyl_cyclase"/>
</dbReference>
<dbReference type="InterPro" id="IPR001126">
    <property type="entry name" value="UmuC"/>
</dbReference>
<dbReference type="NCBIfam" id="NF002492">
    <property type="entry name" value="PRK01810.1"/>
    <property type="match status" value="1"/>
</dbReference>
<dbReference type="NCBIfam" id="NF002677">
    <property type="entry name" value="PRK02406.1"/>
    <property type="match status" value="1"/>
</dbReference>
<dbReference type="PANTHER" id="PTHR11076:SF33">
    <property type="entry name" value="DNA POLYMERASE KAPPA"/>
    <property type="match status" value="1"/>
</dbReference>
<dbReference type="PANTHER" id="PTHR11076">
    <property type="entry name" value="DNA REPAIR POLYMERASE UMUC / TRANSFERASE FAMILY MEMBER"/>
    <property type="match status" value="1"/>
</dbReference>
<dbReference type="Pfam" id="PF00817">
    <property type="entry name" value="IMS"/>
    <property type="match status" value="1"/>
</dbReference>
<dbReference type="Pfam" id="PF11799">
    <property type="entry name" value="IMS_C"/>
    <property type="match status" value="1"/>
</dbReference>
<dbReference type="Pfam" id="PF11798">
    <property type="entry name" value="IMS_HHH"/>
    <property type="match status" value="1"/>
</dbReference>
<dbReference type="PIRSF" id="PIRSF036603">
    <property type="entry name" value="DPol_eta"/>
    <property type="match status" value="1"/>
</dbReference>
<dbReference type="SUPFAM" id="SSF56672">
    <property type="entry name" value="DNA/RNA polymerases"/>
    <property type="match status" value="1"/>
</dbReference>
<dbReference type="SUPFAM" id="SSF100879">
    <property type="entry name" value="Lesion bypass DNA polymerase (Y-family), little finger domain"/>
    <property type="match status" value="1"/>
</dbReference>
<dbReference type="PROSITE" id="PS50173">
    <property type="entry name" value="UMUC"/>
    <property type="match status" value="1"/>
</dbReference>
<evidence type="ECO:0000255" key="1">
    <source>
        <dbReference type="HAMAP-Rule" id="MF_01113"/>
    </source>
</evidence>
<evidence type="ECO:0000256" key="2">
    <source>
        <dbReference type="SAM" id="MobiDB-lite"/>
    </source>
</evidence>
<name>DPO4_BACVZ</name>
<feature type="chain" id="PRO_1000084878" description="DNA polymerase IV">
    <location>
        <begin position="1"/>
        <end position="414"/>
    </location>
</feature>
<feature type="domain" description="UmuC" evidence="1">
    <location>
        <begin position="8"/>
        <end position="189"/>
    </location>
</feature>
<feature type="region of interest" description="Disordered" evidence="2">
    <location>
        <begin position="394"/>
        <end position="414"/>
    </location>
</feature>
<feature type="active site" evidence="1">
    <location>
        <position position="109"/>
    </location>
</feature>
<feature type="binding site" evidence="1">
    <location>
        <position position="12"/>
    </location>
    <ligand>
        <name>Mg(2+)</name>
        <dbReference type="ChEBI" id="CHEBI:18420"/>
    </ligand>
</feature>
<feature type="binding site" evidence="1">
    <location>
        <position position="108"/>
    </location>
    <ligand>
        <name>Mg(2+)</name>
        <dbReference type="ChEBI" id="CHEBI:18420"/>
    </ligand>
</feature>
<feature type="site" description="Substrate discrimination" evidence="1">
    <location>
        <position position="17"/>
    </location>
</feature>
<accession>A7Z6F3</accession>
<protein>
    <recommendedName>
        <fullName evidence="1">DNA polymerase IV</fullName>
        <shortName evidence="1">Pol IV</shortName>
        <ecNumber evidence="1">2.7.7.7</ecNumber>
    </recommendedName>
</protein>
<reference key="1">
    <citation type="journal article" date="2007" name="Nat. Biotechnol.">
        <title>Comparative analysis of the complete genome sequence of the plant growth-promoting bacterium Bacillus amyloliquefaciens FZB42.</title>
        <authorList>
            <person name="Chen X.H."/>
            <person name="Koumoutsi A."/>
            <person name="Scholz R."/>
            <person name="Eisenreich A."/>
            <person name="Schneider K."/>
            <person name="Heinemeyer I."/>
            <person name="Morgenstern B."/>
            <person name="Voss B."/>
            <person name="Hess W.R."/>
            <person name="Reva O."/>
            <person name="Junge H."/>
            <person name="Voigt B."/>
            <person name="Jungblut P.R."/>
            <person name="Vater J."/>
            <person name="Suessmuth R."/>
            <person name="Liesegang H."/>
            <person name="Strittmatter A."/>
            <person name="Gottschalk G."/>
            <person name="Borriss R."/>
        </authorList>
    </citation>
    <scope>NUCLEOTIDE SEQUENCE [LARGE SCALE GENOMIC DNA]</scope>
    <source>
        <strain>DSM 23117 / BGSC 10A6 / LMG 26770 / FZB42</strain>
    </source>
</reference>
<comment type="function">
    <text evidence="1">Poorly processive, error-prone DNA polymerase involved in untargeted mutagenesis. Copies undamaged DNA at stalled replication forks, which arise in vivo from mismatched or misaligned primer ends. These misaligned primers can be extended by PolIV. Exhibits no 3'-5' exonuclease (proofreading) activity. May be involved in translesional synthesis, in conjunction with the beta clamp from PolIII.</text>
</comment>
<comment type="catalytic activity">
    <reaction evidence="1">
        <text>DNA(n) + a 2'-deoxyribonucleoside 5'-triphosphate = DNA(n+1) + diphosphate</text>
        <dbReference type="Rhea" id="RHEA:22508"/>
        <dbReference type="Rhea" id="RHEA-COMP:17339"/>
        <dbReference type="Rhea" id="RHEA-COMP:17340"/>
        <dbReference type="ChEBI" id="CHEBI:33019"/>
        <dbReference type="ChEBI" id="CHEBI:61560"/>
        <dbReference type="ChEBI" id="CHEBI:173112"/>
        <dbReference type="EC" id="2.7.7.7"/>
    </reaction>
</comment>
<comment type="cofactor">
    <cofactor evidence="1">
        <name>Mg(2+)</name>
        <dbReference type="ChEBI" id="CHEBI:18420"/>
    </cofactor>
    <text evidence="1">Binds 2 magnesium ions per subunit.</text>
</comment>
<comment type="subunit">
    <text evidence="1">Monomer.</text>
</comment>
<comment type="subcellular location">
    <subcellularLocation>
        <location evidence="1">Cytoplasm</location>
    </subcellularLocation>
</comment>
<comment type="similarity">
    <text evidence="1">Belongs to the DNA polymerase type-Y family.</text>
</comment>
<organism>
    <name type="scientific">Bacillus velezensis (strain DSM 23117 / BGSC 10A6 / LMG 26770 / FZB42)</name>
    <name type="common">Bacillus amyloliquefaciens subsp. plantarum</name>
    <dbReference type="NCBI Taxonomy" id="326423"/>
    <lineage>
        <taxon>Bacteria</taxon>
        <taxon>Bacillati</taxon>
        <taxon>Bacillota</taxon>
        <taxon>Bacilli</taxon>
        <taxon>Bacillales</taxon>
        <taxon>Bacillaceae</taxon>
        <taxon>Bacillus</taxon>
        <taxon>Bacillus amyloliquefaciens group</taxon>
    </lineage>
</organism>
<gene>
    <name evidence="1" type="primary">dinB</name>
    <name type="ordered locus">RBAM_022180</name>
</gene>